<evidence type="ECO:0000255" key="1">
    <source>
        <dbReference type="HAMAP-Rule" id="MF_00362"/>
    </source>
</evidence>
<evidence type="ECO:0000305" key="2"/>
<sequence>MTRVRPEKQAVVEQLREWIDQSKGMVFFSFEGLTSKDMQAMRADMKRNGLTVKVVKNTLLELAVKEVGLNVDESLFRGTTALLFSNEDELAPFKLFVEQVKKYGVLQAKGGILEGRWISAKEVDAIAKLPGRQELYAQLVGVVSSPMRGLVTVLSGPYRNLVYVLQAIKEKKEKAA</sequence>
<protein>
    <recommendedName>
        <fullName evidence="1">Large ribosomal subunit protein uL10</fullName>
    </recommendedName>
    <alternativeName>
        <fullName evidence="2">50S ribosomal protein L10</fullName>
    </alternativeName>
</protein>
<dbReference type="EMBL" id="CP001145">
    <property type="protein sequence ID" value="ACI17114.1"/>
    <property type="molecule type" value="Genomic_DNA"/>
</dbReference>
<dbReference type="RefSeq" id="WP_012543766.1">
    <property type="nucleotide sequence ID" value="NC_011295.1"/>
</dbReference>
<dbReference type="SMR" id="B5Y932"/>
<dbReference type="STRING" id="309798.COPRO5265_0950"/>
<dbReference type="KEGG" id="cpo:COPRO5265_0950"/>
<dbReference type="eggNOG" id="COG0244">
    <property type="taxonomic scope" value="Bacteria"/>
</dbReference>
<dbReference type="HOGENOM" id="CLU_092227_1_2_9"/>
<dbReference type="OrthoDB" id="9808307at2"/>
<dbReference type="Proteomes" id="UP000001732">
    <property type="component" value="Chromosome"/>
</dbReference>
<dbReference type="GO" id="GO:1990904">
    <property type="term" value="C:ribonucleoprotein complex"/>
    <property type="evidence" value="ECO:0007669"/>
    <property type="project" value="UniProtKB-KW"/>
</dbReference>
<dbReference type="GO" id="GO:0005840">
    <property type="term" value="C:ribosome"/>
    <property type="evidence" value="ECO:0007669"/>
    <property type="project" value="UniProtKB-KW"/>
</dbReference>
<dbReference type="GO" id="GO:0070180">
    <property type="term" value="F:large ribosomal subunit rRNA binding"/>
    <property type="evidence" value="ECO:0007669"/>
    <property type="project" value="UniProtKB-UniRule"/>
</dbReference>
<dbReference type="GO" id="GO:0006412">
    <property type="term" value="P:translation"/>
    <property type="evidence" value="ECO:0007669"/>
    <property type="project" value="UniProtKB-UniRule"/>
</dbReference>
<dbReference type="CDD" id="cd05797">
    <property type="entry name" value="Ribosomal_L10"/>
    <property type="match status" value="1"/>
</dbReference>
<dbReference type="Gene3D" id="3.30.70.1730">
    <property type="match status" value="1"/>
</dbReference>
<dbReference type="Gene3D" id="6.10.250.290">
    <property type="match status" value="1"/>
</dbReference>
<dbReference type="HAMAP" id="MF_00362">
    <property type="entry name" value="Ribosomal_uL10"/>
    <property type="match status" value="1"/>
</dbReference>
<dbReference type="InterPro" id="IPR001790">
    <property type="entry name" value="Ribosomal_uL10"/>
</dbReference>
<dbReference type="InterPro" id="IPR043141">
    <property type="entry name" value="Ribosomal_uL10-like_sf"/>
</dbReference>
<dbReference type="InterPro" id="IPR022973">
    <property type="entry name" value="Ribosomal_uL10_bac"/>
</dbReference>
<dbReference type="InterPro" id="IPR047865">
    <property type="entry name" value="Ribosomal_uL10_bac_type"/>
</dbReference>
<dbReference type="NCBIfam" id="NF000955">
    <property type="entry name" value="PRK00099.1-1"/>
    <property type="match status" value="1"/>
</dbReference>
<dbReference type="PANTHER" id="PTHR11560">
    <property type="entry name" value="39S RIBOSOMAL PROTEIN L10, MITOCHONDRIAL"/>
    <property type="match status" value="1"/>
</dbReference>
<dbReference type="Pfam" id="PF00466">
    <property type="entry name" value="Ribosomal_L10"/>
    <property type="match status" value="1"/>
</dbReference>
<dbReference type="SUPFAM" id="SSF160369">
    <property type="entry name" value="Ribosomal protein L10-like"/>
    <property type="match status" value="1"/>
</dbReference>
<keyword id="KW-1185">Reference proteome</keyword>
<keyword id="KW-0687">Ribonucleoprotein</keyword>
<keyword id="KW-0689">Ribosomal protein</keyword>
<keyword id="KW-0694">RNA-binding</keyword>
<keyword id="KW-0699">rRNA-binding</keyword>
<gene>
    <name evidence="1" type="primary">rplJ</name>
    <name type="ordered locus">COPRO5265_0950</name>
</gene>
<comment type="function">
    <text evidence="1">Forms part of the ribosomal stalk, playing a central role in the interaction of the ribosome with GTP-bound translation factors.</text>
</comment>
<comment type="subunit">
    <text evidence="1">Part of the ribosomal stalk of the 50S ribosomal subunit. The N-terminus interacts with L11 and the large rRNA to form the base of the stalk. The C-terminus forms an elongated spine to which L12 dimers bind in a sequential fashion forming a multimeric L10(L12)X complex.</text>
</comment>
<comment type="similarity">
    <text evidence="1">Belongs to the universal ribosomal protein uL10 family.</text>
</comment>
<organism>
    <name type="scientific">Coprothermobacter proteolyticus (strain ATCC 35245 / DSM 5265 / OCM 4 / BT)</name>
    <dbReference type="NCBI Taxonomy" id="309798"/>
    <lineage>
        <taxon>Bacteria</taxon>
        <taxon>Pseudomonadati</taxon>
        <taxon>Coprothermobacterota</taxon>
        <taxon>Coprothermobacteria</taxon>
        <taxon>Coprothermobacterales</taxon>
        <taxon>Coprothermobacteraceae</taxon>
        <taxon>Coprothermobacter</taxon>
    </lineage>
</organism>
<reference key="1">
    <citation type="submission" date="2008-08" db="EMBL/GenBank/DDBJ databases">
        <title>The complete genome sequence of Coprothermobacter proteolyticus strain ATCC 5245 / DSM 5265 / BT.</title>
        <authorList>
            <person name="Dodson R.J."/>
            <person name="Durkin A.S."/>
            <person name="Wu M."/>
            <person name="Eisen J."/>
            <person name="Sutton G."/>
        </authorList>
    </citation>
    <scope>NUCLEOTIDE SEQUENCE [LARGE SCALE GENOMIC DNA]</scope>
    <source>
        <strain>ATCC 35245 / DSM 5265 / OCM 4 / BT</strain>
    </source>
</reference>
<name>RL10_COPPD</name>
<feature type="chain" id="PRO_1000120939" description="Large ribosomal subunit protein uL10">
    <location>
        <begin position="1"/>
        <end position="176"/>
    </location>
</feature>
<accession>B5Y932</accession>
<proteinExistence type="inferred from homology"/>